<organism>
    <name type="scientific">Escherichia coli O6:H1 (strain CFT073 / ATCC 700928 / UPEC)</name>
    <dbReference type="NCBI Taxonomy" id="199310"/>
    <lineage>
        <taxon>Bacteria</taxon>
        <taxon>Pseudomonadati</taxon>
        <taxon>Pseudomonadota</taxon>
        <taxon>Gammaproteobacteria</taxon>
        <taxon>Enterobacterales</taxon>
        <taxon>Enterobacteriaceae</taxon>
        <taxon>Escherichia</taxon>
    </lineage>
</organism>
<gene>
    <name type="primary">yhfL</name>
    <name type="ordered locus">c4145</name>
</gene>
<comment type="subcellular location">
    <subcellularLocation>
        <location evidence="2">Membrane</location>
        <topology evidence="2">Single-pass membrane protein</topology>
    </subcellularLocation>
</comment>
<feature type="chain" id="PRO_0000169526" description="Uncharacterized protein YhfL">
    <location>
        <begin position="1"/>
        <end position="55"/>
    </location>
</feature>
<feature type="transmembrane region" description="Helical" evidence="1">
    <location>
        <begin position="7"/>
        <end position="24"/>
    </location>
</feature>
<dbReference type="EMBL" id="AE014075">
    <property type="protein sequence ID" value="AAN82583.1"/>
    <property type="molecule type" value="Genomic_DNA"/>
</dbReference>
<dbReference type="RefSeq" id="WP_001031834.1">
    <property type="nucleotide sequence ID" value="NZ_CP051263.1"/>
</dbReference>
<dbReference type="STRING" id="199310.c4145"/>
<dbReference type="KEGG" id="ecc:c4145"/>
<dbReference type="eggNOG" id="ENOG5032ZRK">
    <property type="taxonomic scope" value="Bacteria"/>
</dbReference>
<dbReference type="HOGENOM" id="CLU_197401_0_0_6"/>
<dbReference type="BioCyc" id="ECOL199310:C4145-MONOMER"/>
<dbReference type="Proteomes" id="UP000001410">
    <property type="component" value="Chromosome"/>
</dbReference>
<dbReference type="GO" id="GO:0016020">
    <property type="term" value="C:membrane"/>
    <property type="evidence" value="ECO:0007669"/>
    <property type="project" value="UniProtKB-SubCell"/>
</dbReference>
<dbReference type="InterPro" id="IPR025318">
    <property type="entry name" value="DUF4223"/>
</dbReference>
<dbReference type="Pfam" id="PF13978">
    <property type="entry name" value="DUF4223"/>
    <property type="match status" value="1"/>
</dbReference>
<dbReference type="PROSITE" id="PS51257">
    <property type="entry name" value="PROKAR_LIPOPROTEIN"/>
    <property type="match status" value="1"/>
</dbReference>
<accession>P64628</accession>
<accession>P45538</accession>
<keyword id="KW-0472">Membrane</keyword>
<keyword id="KW-1185">Reference proteome</keyword>
<keyword id="KW-0812">Transmembrane</keyword>
<keyword id="KW-1133">Transmembrane helix</keyword>
<reference key="1">
    <citation type="journal article" date="2002" name="Proc. Natl. Acad. Sci. U.S.A.">
        <title>Extensive mosaic structure revealed by the complete genome sequence of uropathogenic Escherichia coli.</title>
        <authorList>
            <person name="Welch R.A."/>
            <person name="Burland V."/>
            <person name="Plunkett G. III"/>
            <person name="Redford P."/>
            <person name="Roesch P."/>
            <person name="Rasko D."/>
            <person name="Buckles E.L."/>
            <person name="Liou S.-R."/>
            <person name="Boutin A."/>
            <person name="Hackett J."/>
            <person name="Stroud D."/>
            <person name="Mayhew G.F."/>
            <person name="Rose D.J."/>
            <person name="Zhou S."/>
            <person name="Schwartz D.C."/>
            <person name="Perna N.T."/>
            <person name="Mobley H.L.T."/>
            <person name="Donnenberg M.S."/>
            <person name="Blattner F.R."/>
        </authorList>
    </citation>
    <scope>NUCLEOTIDE SEQUENCE [LARGE SCALE GENOMIC DNA]</scope>
    <source>
        <strain>CFT073 / ATCC 700928 / UPEC</strain>
    </source>
</reference>
<evidence type="ECO:0000255" key="1"/>
<evidence type="ECO:0000305" key="2"/>
<sequence>MNKFIKVALVGAVLATLTACTGHIENRDKNCSYDYLLHPAISISKIIGGCGPTAQ</sequence>
<protein>
    <recommendedName>
        <fullName>Uncharacterized protein YhfL</fullName>
    </recommendedName>
</protein>
<name>YHFL_ECOL6</name>
<proteinExistence type="predicted"/>